<accession>Q6HME9</accession>
<evidence type="ECO:0000255" key="1">
    <source>
        <dbReference type="HAMAP-Rule" id="MF_01427"/>
    </source>
</evidence>
<evidence type="ECO:0000255" key="2">
    <source>
        <dbReference type="PROSITE-ProRule" id="PRU01175"/>
    </source>
</evidence>
<reference key="1">
    <citation type="journal article" date="2006" name="J. Bacteriol.">
        <title>Pathogenomic sequence analysis of Bacillus cereus and Bacillus thuringiensis isolates closely related to Bacillus anthracis.</title>
        <authorList>
            <person name="Han C.S."/>
            <person name="Xie G."/>
            <person name="Challacombe J.F."/>
            <person name="Altherr M.R."/>
            <person name="Bhotika S.S."/>
            <person name="Bruce D."/>
            <person name="Campbell C.S."/>
            <person name="Campbell M.L."/>
            <person name="Chen J."/>
            <person name="Chertkov O."/>
            <person name="Cleland C."/>
            <person name="Dimitrijevic M."/>
            <person name="Doggett N.A."/>
            <person name="Fawcett J.J."/>
            <person name="Glavina T."/>
            <person name="Goodwin L.A."/>
            <person name="Hill K.K."/>
            <person name="Hitchcock P."/>
            <person name="Jackson P.J."/>
            <person name="Keim P."/>
            <person name="Kewalramani A.R."/>
            <person name="Longmire J."/>
            <person name="Lucas S."/>
            <person name="Malfatti S."/>
            <person name="McMurry K."/>
            <person name="Meincke L.J."/>
            <person name="Misra M."/>
            <person name="Moseman B.L."/>
            <person name="Mundt M."/>
            <person name="Munk A.C."/>
            <person name="Okinaka R.T."/>
            <person name="Parson-Quintana B."/>
            <person name="Reilly L.P."/>
            <person name="Richardson P."/>
            <person name="Robinson D.L."/>
            <person name="Rubin E."/>
            <person name="Saunders E."/>
            <person name="Tapia R."/>
            <person name="Tesmer J.G."/>
            <person name="Thayer N."/>
            <person name="Thompson L.S."/>
            <person name="Tice H."/>
            <person name="Ticknor L.O."/>
            <person name="Wills P.L."/>
            <person name="Brettin T.S."/>
            <person name="Gilna P."/>
        </authorList>
    </citation>
    <scope>NUCLEOTIDE SEQUENCE [LARGE SCALE GENOMIC DNA]</scope>
    <source>
        <strain>97-27</strain>
    </source>
</reference>
<gene>
    <name evidence="1" type="primary">yhaM</name>
    <name type="ordered locus">BT9727_0933</name>
</gene>
<protein>
    <recommendedName>
        <fullName evidence="1">3'-5' exoribonuclease YhaM</fullName>
        <ecNumber evidence="1">3.1.-.-</ecNumber>
    </recommendedName>
</protein>
<sequence>MKKKIAEYEVGEQVDIFLLIKTATKGIASNGKPFLTVILQDPSGDIEAKLWDVSPEVEKQYVAETIVKVAGDILNYKGRIQLRVKQIRVANENEVTDISDFVEKAPVKKEDMVEKITQYIFEMRNPNIQRLTRHLLNKHQNEFLDYPAATKNHHEFVSGLAYHVVSMLDLAKAISNLYPSLDKDLLYAGVILHDLGKVIELSGPISTTYTLEGNLLGHISIMVNEIGKAADELQIDAEEVLILQHIVLSHHGKAEWGSPKPPLVKEAEILHYIDNLDAKMNMMDRALGRTKPGEYTERVFALDNRSFYKPSFHN</sequence>
<dbReference type="EC" id="3.1.-.-" evidence="1"/>
<dbReference type="EMBL" id="AE017355">
    <property type="protein sequence ID" value="AAT62280.1"/>
    <property type="molecule type" value="Genomic_DNA"/>
</dbReference>
<dbReference type="RefSeq" id="WP_000726638.1">
    <property type="nucleotide sequence ID" value="NC_005957.1"/>
</dbReference>
<dbReference type="RefSeq" id="YP_035272.1">
    <property type="nucleotide sequence ID" value="NC_005957.1"/>
</dbReference>
<dbReference type="SMR" id="Q6HME9"/>
<dbReference type="GeneID" id="69533483"/>
<dbReference type="KEGG" id="btk:BT9727_0933"/>
<dbReference type="PATRIC" id="fig|281309.8.peg.983"/>
<dbReference type="HOGENOM" id="CLU_056349_2_0_9"/>
<dbReference type="Proteomes" id="UP000001301">
    <property type="component" value="Chromosome"/>
</dbReference>
<dbReference type="GO" id="GO:0000175">
    <property type="term" value="F:3'-5'-RNA exonuclease activity"/>
    <property type="evidence" value="ECO:0007669"/>
    <property type="project" value="UniProtKB-UniRule"/>
</dbReference>
<dbReference type="GO" id="GO:0003677">
    <property type="term" value="F:DNA binding"/>
    <property type="evidence" value="ECO:0007669"/>
    <property type="project" value="UniProtKB-KW"/>
</dbReference>
<dbReference type="GO" id="GO:0031125">
    <property type="term" value="P:rRNA 3'-end processing"/>
    <property type="evidence" value="ECO:0007669"/>
    <property type="project" value="TreeGrafter"/>
</dbReference>
<dbReference type="CDD" id="cd00077">
    <property type="entry name" value="HDc"/>
    <property type="match status" value="1"/>
</dbReference>
<dbReference type="CDD" id="cd04492">
    <property type="entry name" value="YhaM_OBF_like"/>
    <property type="match status" value="1"/>
</dbReference>
<dbReference type="FunFam" id="1.10.3210.10:FF:000008">
    <property type="entry name" value="3'-5' exoribonuclease YhaM"/>
    <property type="match status" value="1"/>
</dbReference>
<dbReference type="Gene3D" id="1.10.3210.10">
    <property type="entry name" value="Hypothetical protein af1432"/>
    <property type="match status" value="1"/>
</dbReference>
<dbReference type="Gene3D" id="2.40.50.140">
    <property type="entry name" value="Nucleic acid-binding proteins"/>
    <property type="match status" value="1"/>
</dbReference>
<dbReference type="HAMAP" id="MF_01427">
    <property type="entry name" value="3_5_Exoribonuc_YhaM"/>
    <property type="match status" value="1"/>
</dbReference>
<dbReference type="InterPro" id="IPR020873">
    <property type="entry name" value="3'-5'_exoribonuclease_YhaM"/>
</dbReference>
<dbReference type="InterPro" id="IPR003607">
    <property type="entry name" value="HD/PDEase_dom"/>
</dbReference>
<dbReference type="InterPro" id="IPR006674">
    <property type="entry name" value="HD_domain"/>
</dbReference>
<dbReference type="InterPro" id="IPR012340">
    <property type="entry name" value="NA-bd_OB-fold"/>
</dbReference>
<dbReference type="InterPro" id="IPR004365">
    <property type="entry name" value="NA-bd_OB_tRNA"/>
</dbReference>
<dbReference type="InterPro" id="IPR050798">
    <property type="entry name" value="YhaM_exoribonuc/phosphodiest"/>
</dbReference>
<dbReference type="NCBIfam" id="NF010007">
    <property type="entry name" value="PRK13480.1"/>
    <property type="match status" value="1"/>
</dbReference>
<dbReference type="PANTHER" id="PTHR37294">
    <property type="entry name" value="3'-5' EXORIBONUCLEASE YHAM"/>
    <property type="match status" value="1"/>
</dbReference>
<dbReference type="PANTHER" id="PTHR37294:SF1">
    <property type="entry name" value="3'-5' EXORIBONUCLEASE YHAM"/>
    <property type="match status" value="1"/>
</dbReference>
<dbReference type="Pfam" id="PF01966">
    <property type="entry name" value="HD"/>
    <property type="match status" value="1"/>
</dbReference>
<dbReference type="Pfam" id="PF01336">
    <property type="entry name" value="tRNA_anti-codon"/>
    <property type="match status" value="1"/>
</dbReference>
<dbReference type="SMART" id="SM00471">
    <property type="entry name" value="HDc"/>
    <property type="match status" value="1"/>
</dbReference>
<dbReference type="SUPFAM" id="SSF109604">
    <property type="entry name" value="HD-domain/PDEase-like"/>
    <property type="match status" value="1"/>
</dbReference>
<dbReference type="SUPFAM" id="SSF50249">
    <property type="entry name" value="Nucleic acid-binding proteins"/>
    <property type="match status" value="1"/>
</dbReference>
<dbReference type="PROSITE" id="PS51831">
    <property type="entry name" value="HD"/>
    <property type="match status" value="1"/>
</dbReference>
<feature type="chain" id="PRO_0000109858" description="3'-5' exoribonuclease YhaM">
    <location>
        <begin position="1"/>
        <end position="314"/>
    </location>
</feature>
<feature type="domain" description="HD" evidence="2">
    <location>
        <begin position="163"/>
        <end position="279"/>
    </location>
</feature>
<feature type="DNA-binding region" description="OB">
    <location>
        <begin position="14"/>
        <end position="90"/>
    </location>
</feature>
<comment type="function">
    <text evidence="1">Shows a 3'-5' exoribonuclease activity.</text>
</comment>
<comment type="similarity">
    <text evidence="1">Belongs to the YhaM family.</text>
</comment>
<proteinExistence type="inferred from homology"/>
<organism>
    <name type="scientific">Bacillus thuringiensis subsp. konkukian (strain 97-27)</name>
    <dbReference type="NCBI Taxonomy" id="281309"/>
    <lineage>
        <taxon>Bacteria</taxon>
        <taxon>Bacillati</taxon>
        <taxon>Bacillota</taxon>
        <taxon>Bacilli</taxon>
        <taxon>Bacillales</taxon>
        <taxon>Bacillaceae</taxon>
        <taxon>Bacillus</taxon>
        <taxon>Bacillus cereus group</taxon>
    </lineage>
</organism>
<keyword id="KW-0238">DNA-binding</keyword>
<keyword id="KW-0269">Exonuclease</keyword>
<keyword id="KW-0378">Hydrolase</keyword>
<keyword id="KW-0540">Nuclease</keyword>
<name>YHAM_BACHK</name>